<dbReference type="EC" id="5.2.1.8"/>
<dbReference type="EMBL" id="AF182826">
    <property type="protein sequence ID" value="AAF01031.1"/>
    <property type="molecule type" value="mRNA"/>
</dbReference>
<dbReference type="EMBL" id="AE013599">
    <property type="protein sequence ID" value="AAF57839.1"/>
    <property type="molecule type" value="Genomic_DNA"/>
</dbReference>
<dbReference type="EMBL" id="AY061421">
    <property type="protein sequence ID" value="AAL28969.1"/>
    <property type="molecule type" value="mRNA"/>
</dbReference>
<dbReference type="RefSeq" id="NP_523773.1">
    <property type="nucleotide sequence ID" value="NM_079049.4"/>
</dbReference>
<dbReference type="SMR" id="Q9V3G3"/>
<dbReference type="BioGRID" id="62673">
    <property type="interactions" value="5"/>
</dbReference>
<dbReference type="DIP" id="DIP-21959N"/>
<dbReference type="FunCoup" id="Q9V3G3">
    <property type="interactions" value="1676"/>
</dbReference>
<dbReference type="IntAct" id="Q9V3G3">
    <property type="interactions" value="30"/>
</dbReference>
<dbReference type="STRING" id="7227.FBpp0086101"/>
<dbReference type="PaxDb" id="7227-FBpp0086101"/>
<dbReference type="DNASU" id="36984"/>
<dbReference type="EnsemblMetazoa" id="FBtr0086945">
    <property type="protein sequence ID" value="FBpp0086101"/>
    <property type="gene ID" value="FBgn0028382"/>
</dbReference>
<dbReference type="GeneID" id="36984"/>
<dbReference type="KEGG" id="dme:Dmel_CG4886"/>
<dbReference type="UCSC" id="CG4886-RA">
    <property type="organism name" value="d. melanogaster"/>
</dbReference>
<dbReference type="AGR" id="FB:FBgn0028382"/>
<dbReference type="CTD" id="36984"/>
<dbReference type="FlyBase" id="FBgn0028382">
    <property type="gene designation" value="cyp33"/>
</dbReference>
<dbReference type="VEuPathDB" id="VectorBase:FBgn0028382"/>
<dbReference type="eggNOG" id="KOG0111">
    <property type="taxonomic scope" value="Eukaryota"/>
</dbReference>
<dbReference type="GeneTree" id="ENSGT00940000165717"/>
<dbReference type="HOGENOM" id="CLU_012062_27_0_1"/>
<dbReference type="InParanoid" id="Q9V3G3"/>
<dbReference type="OMA" id="KIVIYAC"/>
<dbReference type="OrthoDB" id="193499at2759"/>
<dbReference type="PhylomeDB" id="Q9V3G3"/>
<dbReference type="SignaLink" id="Q9V3G3"/>
<dbReference type="BioGRID-ORCS" id="36984">
    <property type="hits" value="0 hits in 1 CRISPR screen"/>
</dbReference>
<dbReference type="GenomeRNAi" id="36984"/>
<dbReference type="PRO" id="PR:Q9V3G3"/>
<dbReference type="Proteomes" id="UP000000803">
    <property type="component" value="Chromosome 2R"/>
</dbReference>
<dbReference type="Bgee" id="FBgn0028382">
    <property type="expression patterns" value="Expressed in eye disc (Drosophila) and 73 other cell types or tissues"/>
</dbReference>
<dbReference type="GO" id="GO:0071013">
    <property type="term" value="C:catalytic step 2 spliceosome"/>
    <property type="evidence" value="ECO:0007005"/>
    <property type="project" value="FlyBase"/>
</dbReference>
<dbReference type="GO" id="GO:0005737">
    <property type="term" value="C:cytoplasm"/>
    <property type="evidence" value="ECO:0000318"/>
    <property type="project" value="GO_Central"/>
</dbReference>
<dbReference type="GO" id="GO:0043231">
    <property type="term" value="C:intracellular membrane-bounded organelle"/>
    <property type="evidence" value="ECO:0000318"/>
    <property type="project" value="GO_Central"/>
</dbReference>
<dbReference type="GO" id="GO:0071011">
    <property type="term" value="C:precatalytic spliceosome"/>
    <property type="evidence" value="ECO:0007005"/>
    <property type="project" value="FlyBase"/>
</dbReference>
<dbReference type="GO" id="GO:0000974">
    <property type="term" value="C:Prp19 complex"/>
    <property type="evidence" value="ECO:0000314"/>
    <property type="project" value="FlyBase"/>
</dbReference>
<dbReference type="GO" id="GO:0016018">
    <property type="term" value="F:cyclosporin A binding"/>
    <property type="evidence" value="ECO:0000318"/>
    <property type="project" value="GO_Central"/>
</dbReference>
<dbReference type="GO" id="GO:0003729">
    <property type="term" value="F:mRNA binding"/>
    <property type="evidence" value="ECO:0000250"/>
    <property type="project" value="FlyBase"/>
</dbReference>
<dbReference type="GO" id="GO:0003755">
    <property type="term" value="F:peptidyl-prolyl cis-trans isomerase activity"/>
    <property type="evidence" value="ECO:0000318"/>
    <property type="project" value="GO_Central"/>
</dbReference>
<dbReference type="GO" id="GO:0000398">
    <property type="term" value="P:mRNA splicing, via spliceosome"/>
    <property type="evidence" value="ECO:0000305"/>
    <property type="project" value="FlyBase"/>
</dbReference>
<dbReference type="GO" id="GO:0006457">
    <property type="term" value="P:protein folding"/>
    <property type="evidence" value="ECO:0000318"/>
    <property type="project" value="GO_Central"/>
</dbReference>
<dbReference type="CDD" id="cd01926">
    <property type="entry name" value="cyclophilin_ABH_like"/>
    <property type="match status" value="1"/>
</dbReference>
<dbReference type="CDD" id="cd12347">
    <property type="entry name" value="RRM_PPIE"/>
    <property type="match status" value="1"/>
</dbReference>
<dbReference type="FunFam" id="2.40.100.10:FF:000010">
    <property type="entry name" value="Peptidyl-prolyl cis-trans isomerase E"/>
    <property type="match status" value="1"/>
</dbReference>
<dbReference type="Gene3D" id="3.30.70.330">
    <property type="match status" value="1"/>
</dbReference>
<dbReference type="Gene3D" id="2.40.100.10">
    <property type="entry name" value="Cyclophilin-like"/>
    <property type="match status" value="1"/>
</dbReference>
<dbReference type="InterPro" id="IPR029000">
    <property type="entry name" value="Cyclophilin-like_dom_sf"/>
</dbReference>
<dbReference type="InterPro" id="IPR020892">
    <property type="entry name" value="Cyclophilin-type_PPIase_CS"/>
</dbReference>
<dbReference type="InterPro" id="IPR002130">
    <property type="entry name" value="Cyclophilin-type_PPIase_dom"/>
</dbReference>
<dbReference type="InterPro" id="IPR012677">
    <property type="entry name" value="Nucleotide-bd_a/b_plait_sf"/>
</dbReference>
<dbReference type="InterPro" id="IPR016304">
    <property type="entry name" value="PPIE"/>
</dbReference>
<dbReference type="InterPro" id="IPR034168">
    <property type="entry name" value="PPIE_RRM"/>
</dbReference>
<dbReference type="InterPro" id="IPR035979">
    <property type="entry name" value="RBD_domain_sf"/>
</dbReference>
<dbReference type="InterPro" id="IPR000504">
    <property type="entry name" value="RRM_dom"/>
</dbReference>
<dbReference type="InterPro" id="IPR003954">
    <property type="entry name" value="RRM_dom_euk"/>
</dbReference>
<dbReference type="PANTHER" id="PTHR11071">
    <property type="entry name" value="PEPTIDYL-PROLYL CIS-TRANS ISOMERASE"/>
    <property type="match status" value="1"/>
</dbReference>
<dbReference type="PANTHER" id="PTHR11071:SF561">
    <property type="entry name" value="PEPTIDYL-PROLYL CIS-TRANS ISOMERASE D-RELATED"/>
    <property type="match status" value="1"/>
</dbReference>
<dbReference type="Pfam" id="PF00160">
    <property type="entry name" value="Pro_isomerase"/>
    <property type="match status" value="1"/>
</dbReference>
<dbReference type="Pfam" id="PF00076">
    <property type="entry name" value="RRM_1"/>
    <property type="match status" value="1"/>
</dbReference>
<dbReference type="PIRSF" id="PIRSF001475">
    <property type="entry name" value="PPI_cyclophilin_E"/>
    <property type="match status" value="1"/>
</dbReference>
<dbReference type="PRINTS" id="PR00153">
    <property type="entry name" value="CSAPPISMRASE"/>
</dbReference>
<dbReference type="SMART" id="SM00360">
    <property type="entry name" value="RRM"/>
    <property type="match status" value="1"/>
</dbReference>
<dbReference type="SMART" id="SM00361">
    <property type="entry name" value="RRM_1"/>
    <property type="match status" value="1"/>
</dbReference>
<dbReference type="SUPFAM" id="SSF50891">
    <property type="entry name" value="Cyclophilin-like"/>
    <property type="match status" value="1"/>
</dbReference>
<dbReference type="SUPFAM" id="SSF54928">
    <property type="entry name" value="RNA-binding domain, RBD"/>
    <property type="match status" value="1"/>
</dbReference>
<dbReference type="PROSITE" id="PS00170">
    <property type="entry name" value="CSA_PPIASE_1"/>
    <property type="match status" value="1"/>
</dbReference>
<dbReference type="PROSITE" id="PS50072">
    <property type="entry name" value="CSA_PPIASE_2"/>
    <property type="match status" value="1"/>
</dbReference>
<dbReference type="PROSITE" id="PS50102">
    <property type="entry name" value="RRM"/>
    <property type="match status" value="1"/>
</dbReference>
<keyword id="KW-0413">Isomerase</keyword>
<keyword id="KW-0539">Nucleus</keyword>
<keyword id="KW-1185">Reference proteome</keyword>
<keyword id="KW-0694">RNA-binding</keyword>
<keyword id="KW-0697">Rotamase</keyword>
<organism>
    <name type="scientific">Drosophila melanogaster</name>
    <name type="common">Fruit fly</name>
    <dbReference type="NCBI Taxonomy" id="7227"/>
    <lineage>
        <taxon>Eukaryota</taxon>
        <taxon>Metazoa</taxon>
        <taxon>Ecdysozoa</taxon>
        <taxon>Arthropoda</taxon>
        <taxon>Hexapoda</taxon>
        <taxon>Insecta</taxon>
        <taxon>Pterygota</taxon>
        <taxon>Neoptera</taxon>
        <taxon>Endopterygota</taxon>
        <taxon>Diptera</taxon>
        <taxon>Brachycera</taxon>
        <taxon>Muscomorpha</taxon>
        <taxon>Ephydroidea</taxon>
        <taxon>Drosophilidae</taxon>
        <taxon>Drosophila</taxon>
        <taxon>Sophophora</taxon>
    </lineage>
</organism>
<comment type="function">
    <text evidence="1">PPIases accelerate the folding of proteins. It catalyzes the cis-trans isomerization of proline imidic peptide bonds in oligopeptides. Combines RNA-binding and PPIase activities (By similarity).</text>
</comment>
<comment type="catalytic activity">
    <reaction>
        <text>[protein]-peptidylproline (omega=180) = [protein]-peptidylproline (omega=0)</text>
        <dbReference type="Rhea" id="RHEA:16237"/>
        <dbReference type="Rhea" id="RHEA-COMP:10747"/>
        <dbReference type="Rhea" id="RHEA-COMP:10748"/>
        <dbReference type="ChEBI" id="CHEBI:83833"/>
        <dbReference type="ChEBI" id="CHEBI:83834"/>
        <dbReference type="EC" id="5.2.1.8"/>
    </reaction>
</comment>
<comment type="interaction">
    <interactant intactId="EBI-128445">
        <id>Q9V3G3</id>
    </interactant>
    <interactant intactId="EBI-591327">
        <id>P20659</id>
        <label>trx</label>
    </interactant>
    <organismsDiffer>false</organismsDiffer>
    <experiments>2</experiments>
</comment>
<comment type="subcellular location">
    <subcellularLocation>
        <location evidence="1">Nucleus</location>
    </subcellularLocation>
</comment>
<comment type="similarity">
    <text evidence="4">Belongs to the cyclophilin-type PPIase family. PPIase E subfamily.</text>
</comment>
<accession>Q9V3G3</accession>
<proteinExistence type="evidence at protein level"/>
<name>PPIE_DROME</name>
<feature type="chain" id="PRO_0000064159" description="Peptidyl-prolyl cis-trans isomerase E">
    <location>
        <begin position="1"/>
        <end position="300"/>
    </location>
</feature>
<feature type="domain" description="RRM" evidence="3">
    <location>
        <begin position="6"/>
        <end position="84"/>
    </location>
</feature>
<feature type="domain" description="PPIase cyclophilin-type" evidence="2">
    <location>
        <begin position="142"/>
        <end position="298"/>
    </location>
</feature>
<reference key="1">
    <citation type="journal article" date="2002" name="Dev. Genes Evol.">
        <title>A new family of cyclophilins with an RNA recognition motif that interact with members of the trx/MLL protein family in Drosophila and human cells.</title>
        <authorList>
            <person name="Anderson M."/>
            <person name="Fair K."/>
            <person name="Amero S."/>
            <person name="Nelson S."/>
            <person name="Harte P.J."/>
            <person name="Diaz M.O."/>
        </authorList>
    </citation>
    <scope>NUCLEOTIDE SEQUENCE [MRNA]</scope>
</reference>
<reference key="2">
    <citation type="journal article" date="2000" name="Science">
        <title>The genome sequence of Drosophila melanogaster.</title>
        <authorList>
            <person name="Adams M.D."/>
            <person name="Celniker S.E."/>
            <person name="Holt R.A."/>
            <person name="Evans C.A."/>
            <person name="Gocayne J.D."/>
            <person name="Amanatides P.G."/>
            <person name="Scherer S.E."/>
            <person name="Li P.W."/>
            <person name="Hoskins R.A."/>
            <person name="Galle R.F."/>
            <person name="George R.A."/>
            <person name="Lewis S.E."/>
            <person name="Richards S."/>
            <person name="Ashburner M."/>
            <person name="Henderson S.N."/>
            <person name="Sutton G.G."/>
            <person name="Wortman J.R."/>
            <person name="Yandell M.D."/>
            <person name="Zhang Q."/>
            <person name="Chen L.X."/>
            <person name="Brandon R.C."/>
            <person name="Rogers Y.-H.C."/>
            <person name="Blazej R.G."/>
            <person name="Champe M."/>
            <person name="Pfeiffer B.D."/>
            <person name="Wan K.H."/>
            <person name="Doyle C."/>
            <person name="Baxter E.G."/>
            <person name="Helt G."/>
            <person name="Nelson C.R."/>
            <person name="Miklos G.L.G."/>
            <person name="Abril J.F."/>
            <person name="Agbayani A."/>
            <person name="An H.-J."/>
            <person name="Andrews-Pfannkoch C."/>
            <person name="Baldwin D."/>
            <person name="Ballew R.M."/>
            <person name="Basu A."/>
            <person name="Baxendale J."/>
            <person name="Bayraktaroglu L."/>
            <person name="Beasley E.M."/>
            <person name="Beeson K.Y."/>
            <person name="Benos P.V."/>
            <person name="Berman B.P."/>
            <person name="Bhandari D."/>
            <person name="Bolshakov S."/>
            <person name="Borkova D."/>
            <person name="Botchan M.R."/>
            <person name="Bouck J."/>
            <person name="Brokstein P."/>
            <person name="Brottier P."/>
            <person name="Burtis K.C."/>
            <person name="Busam D.A."/>
            <person name="Butler H."/>
            <person name="Cadieu E."/>
            <person name="Center A."/>
            <person name="Chandra I."/>
            <person name="Cherry J.M."/>
            <person name="Cawley S."/>
            <person name="Dahlke C."/>
            <person name="Davenport L.B."/>
            <person name="Davies P."/>
            <person name="de Pablos B."/>
            <person name="Delcher A."/>
            <person name="Deng Z."/>
            <person name="Mays A.D."/>
            <person name="Dew I."/>
            <person name="Dietz S.M."/>
            <person name="Dodson K."/>
            <person name="Doup L.E."/>
            <person name="Downes M."/>
            <person name="Dugan-Rocha S."/>
            <person name="Dunkov B.C."/>
            <person name="Dunn P."/>
            <person name="Durbin K.J."/>
            <person name="Evangelista C.C."/>
            <person name="Ferraz C."/>
            <person name="Ferriera S."/>
            <person name="Fleischmann W."/>
            <person name="Fosler C."/>
            <person name="Gabrielian A.E."/>
            <person name="Garg N.S."/>
            <person name="Gelbart W.M."/>
            <person name="Glasser K."/>
            <person name="Glodek A."/>
            <person name="Gong F."/>
            <person name="Gorrell J.H."/>
            <person name="Gu Z."/>
            <person name="Guan P."/>
            <person name="Harris M."/>
            <person name="Harris N.L."/>
            <person name="Harvey D.A."/>
            <person name="Heiman T.J."/>
            <person name="Hernandez J.R."/>
            <person name="Houck J."/>
            <person name="Hostin D."/>
            <person name="Houston K.A."/>
            <person name="Howland T.J."/>
            <person name="Wei M.-H."/>
            <person name="Ibegwam C."/>
            <person name="Jalali M."/>
            <person name="Kalush F."/>
            <person name="Karpen G.H."/>
            <person name="Ke Z."/>
            <person name="Kennison J.A."/>
            <person name="Ketchum K.A."/>
            <person name="Kimmel B.E."/>
            <person name="Kodira C.D."/>
            <person name="Kraft C.L."/>
            <person name="Kravitz S."/>
            <person name="Kulp D."/>
            <person name="Lai Z."/>
            <person name="Lasko P."/>
            <person name="Lei Y."/>
            <person name="Levitsky A.A."/>
            <person name="Li J.H."/>
            <person name="Li Z."/>
            <person name="Liang Y."/>
            <person name="Lin X."/>
            <person name="Liu X."/>
            <person name="Mattei B."/>
            <person name="McIntosh T.C."/>
            <person name="McLeod M.P."/>
            <person name="McPherson D."/>
            <person name="Merkulov G."/>
            <person name="Milshina N.V."/>
            <person name="Mobarry C."/>
            <person name="Morris J."/>
            <person name="Moshrefi A."/>
            <person name="Mount S.M."/>
            <person name="Moy M."/>
            <person name="Murphy B."/>
            <person name="Murphy L."/>
            <person name="Muzny D.M."/>
            <person name="Nelson D.L."/>
            <person name="Nelson D.R."/>
            <person name="Nelson K.A."/>
            <person name="Nixon K."/>
            <person name="Nusskern D.R."/>
            <person name="Pacleb J.M."/>
            <person name="Palazzolo M."/>
            <person name="Pittman G.S."/>
            <person name="Pan S."/>
            <person name="Pollard J."/>
            <person name="Puri V."/>
            <person name="Reese M.G."/>
            <person name="Reinert K."/>
            <person name="Remington K."/>
            <person name="Saunders R.D.C."/>
            <person name="Scheeler F."/>
            <person name="Shen H."/>
            <person name="Shue B.C."/>
            <person name="Siden-Kiamos I."/>
            <person name="Simpson M."/>
            <person name="Skupski M.P."/>
            <person name="Smith T.J."/>
            <person name="Spier E."/>
            <person name="Spradling A.C."/>
            <person name="Stapleton M."/>
            <person name="Strong R."/>
            <person name="Sun E."/>
            <person name="Svirskas R."/>
            <person name="Tector C."/>
            <person name="Turner R."/>
            <person name="Venter E."/>
            <person name="Wang A.H."/>
            <person name="Wang X."/>
            <person name="Wang Z.-Y."/>
            <person name="Wassarman D.A."/>
            <person name="Weinstock G.M."/>
            <person name="Weissenbach J."/>
            <person name="Williams S.M."/>
            <person name="Woodage T."/>
            <person name="Worley K.C."/>
            <person name="Wu D."/>
            <person name="Yang S."/>
            <person name="Yao Q.A."/>
            <person name="Ye J."/>
            <person name="Yeh R.-F."/>
            <person name="Zaveri J.S."/>
            <person name="Zhan M."/>
            <person name="Zhang G."/>
            <person name="Zhao Q."/>
            <person name="Zheng L."/>
            <person name="Zheng X.H."/>
            <person name="Zhong F.N."/>
            <person name="Zhong W."/>
            <person name="Zhou X."/>
            <person name="Zhu S.C."/>
            <person name="Zhu X."/>
            <person name="Smith H.O."/>
            <person name="Gibbs R.A."/>
            <person name="Myers E.W."/>
            <person name="Rubin G.M."/>
            <person name="Venter J.C."/>
        </authorList>
    </citation>
    <scope>NUCLEOTIDE SEQUENCE [LARGE SCALE GENOMIC DNA]</scope>
    <source>
        <strain>Berkeley</strain>
    </source>
</reference>
<reference key="3">
    <citation type="journal article" date="2002" name="Genome Biol.">
        <title>Annotation of the Drosophila melanogaster euchromatic genome: a systematic review.</title>
        <authorList>
            <person name="Misra S."/>
            <person name="Crosby M.A."/>
            <person name="Mungall C.J."/>
            <person name="Matthews B.B."/>
            <person name="Campbell K.S."/>
            <person name="Hradecky P."/>
            <person name="Huang Y."/>
            <person name="Kaminker J.S."/>
            <person name="Millburn G.H."/>
            <person name="Prochnik S.E."/>
            <person name="Smith C.D."/>
            <person name="Tupy J.L."/>
            <person name="Whitfield E.J."/>
            <person name="Bayraktaroglu L."/>
            <person name="Berman B.P."/>
            <person name="Bettencourt B.R."/>
            <person name="Celniker S.E."/>
            <person name="de Grey A.D.N.J."/>
            <person name="Drysdale R.A."/>
            <person name="Harris N.L."/>
            <person name="Richter J."/>
            <person name="Russo S."/>
            <person name="Schroeder A.J."/>
            <person name="Shu S.Q."/>
            <person name="Stapleton M."/>
            <person name="Yamada C."/>
            <person name="Ashburner M."/>
            <person name="Gelbart W.M."/>
            <person name="Rubin G.M."/>
            <person name="Lewis S.E."/>
        </authorList>
    </citation>
    <scope>GENOME REANNOTATION</scope>
    <source>
        <strain>Berkeley</strain>
    </source>
</reference>
<reference key="4">
    <citation type="journal article" date="2002" name="Genome Biol.">
        <title>A Drosophila full-length cDNA resource.</title>
        <authorList>
            <person name="Stapleton M."/>
            <person name="Carlson J.W."/>
            <person name="Brokstein P."/>
            <person name="Yu C."/>
            <person name="Champe M."/>
            <person name="George R.A."/>
            <person name="Guarin H."/>
            <person name="Kronmiller B."/>
            <person name="Pacleb J.M."/>
            <person name="Park S."/>
            <person name="Wan K.H."/>
            <person name="Rubin G.M."/>
            <person name="Celniker S.E."/>
        </authorList>
    </citation>
    <scope>NUCLEOTIDE SEQUENCE [LARGE SCALE MRNA]</scope>
    <source>
        <strain>Berkeley</strain>
    </source>
</reference>
<gene>
    <name type="primary">cyp33</name>
    <name type="ORF">CG4886</name>
</gene>
<evidence type="ECO:0000250" key="1"/>
<evidence type="ECO:0000255" key="2">
    <source>
        <dbReference type="PROSITE-ProRule" id="PRU00156"/>
    </source>
</evidence>
<evidence type="ECO:0000255" key="3">
    <source>
        <dbReference type="PROSITE-ProRule" id="PRU00176"/>
    </source>
</evidence>
<evidence type="ECO:0000305" key="4"/>
<sequence>MSNDKRTIYVGGLADEVTERLLNNAFIPFGDIADIQMPADYESQRHRGFAFIEYEQSEDAAAAIDNMNDSELCGRTIRVNLAKPVRVKEDSFKPIWADDDWLQKHAGATLQPEGEPEAEKVETPSTGPAVIEKAEKRNPQVFFDIRIGGNDAGRIVMLLRADVVPKTAENFRQLCTHEQGYGYKGCSFHRVIPEFMCQGGDFTNNNGTGGKSIYGKKFNDENFNLKHNSFGTLSMANSGANTNGSQFFICTTKTDWLDNKHVVFGHVISGAEVVRKMERCGSKSGTPSQKIVIYSCGELK</sequence>
<protein>
    <recommendedName>
        <fullName>Peptidyl-prolyl cis-trans isomerase E</fullName>
        <shortName>PPIase E</shortName>
        <ecNumber>5.2.1.8</ecNumber>
    </recommendedName>
    <alternativeName>
        <fullName>Cyclophilin 33</fullName>
    </alternativeName>
    <alternativeName>
        <fullName>Cyclophilin E</fullName>
    </alternativeName>
    <alternativeName>
        <fullName>Rotamase E</fullName>
    </alternativeName>
</protein>